<sequence length="464" mass="51441">MAVYNYDVVVLGSGPAGEGAAMNAVKAGRKVAVVDNRPLVGGNCTHLGTIPSKALRHSVRQIMQYNTNPLFRQIGEPRWFSFPDVLKSAEKVISKQVTSRTSYYARNRIDTFFGTASFSDEQSVEVVCLNGMVEKLVANQFVIATGSRPYRPADIDFNHPRIYDSDTILTLSHTPRRMIIYGAGVIGCEYASIFSGLGVLVDLIDNREQLLSFLDDEISDALSYHLRNNNVLIRHNEEYERVEGLENGVILHLKSGKKIKADAFLWSNGRTGNTDKLGLENIGLKANSRGQVQVDEHYRTEIGNIYAAGDVIGWPSLASAAYDQGRSAAGSIVENDSWRFVDDVPTGIYTIPEISSIGKNERELTQAKIPYEVGKAFFKSMARAQISFEPVGMLKILFHRETLEVLGVHCFGYQASEIVHIGQAIMNQKGPANSIKYFVNTTFNYPTMAEAYRVAAFDGLNRLF</sequence>
<comment type="function">
    <text evidence="1">Conversion of NADPH, generated by peripheral catabolic pathways, to NADH, which can enter the respiratory chain for energy generation.</text>
</comment>
<comment type="catalytic activity">
    <reaction evidence="1">
        <text>NAD(+) + NADPH = NADH + NADP(+)</text>
        <dbReference type="Rhea" id="RHEA:11692"/>
        <dbReference type="ChEBI" id="CHEBI:57540"/>
        <dbReference type="ChEBI" id="CHEBI:57783"/>
        <dbReference type="ChEBI" id="CHEBI:57945"/>
        <dbReference type="ChEBI" id="CHEBI:58349"/>
        <dbReference type="EC" id="1.6.1.1"/>
    </reaction>
</comment>
<comment type="cofactor">
    <cofactor evidence="1">
        <name>FAD</name>
        <dbReference type="ChEBI" id="CHEBI:57692"/>
    </cofactor>
    <text evidence="1">Binds 1 FAD per subunit.</text>
</comment>
<comment type="subcellular location">
    <subcellularLocation>
        <location evidence="1">Cytoplasm</location>
    </subcellularLocation>
</comment>
<comment type="similarity">
    <text evidence="1">Belongs to the class-I pyridine nucleotide-disulfide oxidoreductase family.</text>
</comment>
<reference key="1">
    <citation type="journal article" date="2008" name="Proc. Natl. Acad. Sci. U.S.A.">
        <title>Nitrogen fixation island and rhizosphere competence traits in the genome of root-associated Pseudomonas stutzeri A1501.</title>
        <authorList>
            <person name="Yan Y."/>
            <person name="Yang J."/>
            <person name="Dou Y."/>
            <person name="Chen M."/>
            <person name="Ping S."/>
            <person name="Peng J."/>
            <person name="Lu W."/>
            <person name="Zhang W."/>
            <person name="Yao Z."/>
            <person name="Li H."/>
            <person name="Liu W."/>
            <person name="He S."/>
            <person name="Geng L."/>
            <person name="Zhang X."/>
            <person name="Yang F."/>
            <person name="Yu H."/>
            <person name="Zhan Y."/>
            <person name="Li D."/>
            <person name="Lin Z."/>
            <person name="Wang Y."/>
            <person name="Elmerich C."/>
            <person name="Lin M."/>
            <person name="Jin Q."/>
        </authorList>
    </citation>
    <scope>NUCLEOTIDE SEQUENCE [LARGE SCALE GENOMIC DNA]</scope>
    <source>
        <strain>A1501</strain>
    </source>
</reference>
<name>STHA_STUS1</name>
<gene>
    <name evidence="1" type="primary">sthA</name>
    <name type="ordered locus">PST_2647</name>
</gene>
<dbReference type="EC" id="1.6.1.1" evidence="1"/>
<dbReference type="EMBL" id="CP000304">
    <property type="protein sequence ID" value="ABP80297.1"/>
    <property type="molecule type" value="Genomic_DNA"/>
</dbReference>
<dbReference type="RefSeq" id="WP_011913755.1">
    <property type="nucleotide sequence ID" value="NC_009434.1"/>
</dbReference>
<dbReference type="SMR" id="A4VMU6"/>
<dbReference type="GeneID" id="66821964"/>
<dbReference type="KEGG" id="psa:PST_2647"/>
<dbReference type="eggNOG" id="COG1249">
    <property type="taxonomic scope" value="Bacteria"/>
</dbReference>
<dbReference type="HOGENOM" id="CLU_016755_0_0_6"/>
<dbReference type="Proteomes" id="UP000000233">
    <property type="component" value="Chromosome"/>
</dbReference>
<dbReference type="GO" id="GO:0005829">
    <property type="term" value="C:cytosol"/>
    <property type="evidence" value="ECO:0007669"/>
    <property type="project" value="TreeGrafter"/>
</dbReference>
<dbReference type="GO" id="GO:0004148">
    <property type="term" value="F:dihydrolipoyl dehydrogenase (NADH) activity"/>
    <property type="evidence" value="ECO:0007669"/>
    <property type="project" value="TreeGrafter"/>
</dbReference>
<dbReference type="GO" id="GO:0050660">
    <property type="term" value="F:flavin adenine dinucleotide binding"/>
    <property type="evidence" value="ECO:0007669"/>
    <property type="project" value="TreeGrafter"/>
</dbReference>
<dbReference type="GO" id="GO:0003957">
    <property type="term" value="F:NAD(P)+ transhydrogenase (Si-specific) activity"/>
    <property type="evidence" value="ECO:0007669"/>
    <property type="project" value="UniProtKB-UniRule"/>
</dbReference>
<dbReference type="GO" id="GO:0006103">
    <property type="term" value="P:2-oxoglutarate metabolic process"/>
    <property type="evidence" value="ECO:0007669"/>
    <property type="project" value="TreeGrafter"/>
</dbReference>
<dbReference type="GO" id="GO:0006739">
    <property type="term" value="P:NADP metabolic process"/>
    <property type="evidence" value="ECO:0007669"/>
    <property type="project" value="UniProtKB-UniRule"/>
</dbReference>
<dbReference type="FunFam" id="3.30.390.30:FF:000002">
    <property type="entry name" value="Soluble pyridine nucleotide transhydrogenase"/>
    <property type="match status" value="1"/>
</dbReference>
<dbReference type="FunFam" id="3.50.50.60:FF:000008">
    <property type="entry name" value="Soluble pyridine nucleotide transhydrogenase"/>
    <property type="match status" value="1"/>
</dbReference>
<dbReference type="Gene3D" id="3.30.390.30">
    <property type="match status" value="1"/>
</dbReference>
<dbReference type="Gene3D" id="3.50.50.60">
    <property type="entry name" value="FAD/NAD(P)-binding domain"/>
    <property type="match status" value="2"/>
</dbReference>
<dbReference type="HAMAP" id="MF_00247">
    <property type="entry name" value="SthA"/>
    <property type="match status" value="1"/>
</dbReference>
<dbReference type="InterPro" id="IPR050151">
    <property type="entry name" value="Class-I_Pyr_Nuc-Dis_Oxidored"/>
</dbReference>
<dbReference type="InterPro" id="IPR036188">
    <property type="entry name" value="FAD/NAD-bd_sf"/>
</dbReference>
<dbReference type="InterPro" id="IPR023753">
    <property type="entry name" value="FAD/NAD-binding_dom"/>
</dbReference>
<dbReference type="InterPro" id="IPR016156">
    <property type="entry name" value="FAD/NAD-linked_Rdtase_dimer_sf"/>
</dbReference>
<dbReference type="InterPro" id="IPR001100">
    <property type="entry name" value="Pyr_nuc-diS_OxRdtase"/>
</dbReference>
<dbReference type="InterPro" id="IPR004099">
    <property type="entry name" value="Pyr_nucl-diS_OxRdtase_dimer"/>
</dbReference>
<dbReference type="InterPro" id="IPR022962">
    <property type="entry name" value="STH_gammaproteobact"/>
</dbReference>
<dbReference type="NCBIfam" id="NF003585">
    <property type="entry name" value="PRK05249.1"/>
    <property type="match status" value="1"/>
</dbReference>
<dbReference type="PANTHER" id="PTHR22912">
    <property type="entry name" value="DISULFIDE OXIDOREDUCTASE"/>
    <property type="match status" value="1"/>
</dbReference>
<dbReference type="PANTHER" id="PTHR22912:SF93">
    <property type="entry name" value="SOLUBLE PYRIDINE NUCLEOTIDE TRANSHYDROGENASE"/>
    <property type="match status" value="1"/>
</dbReference>
<dbReference type="Pfam" id="PF07992">
    <property type="entry name" value="Pyr_redox_2"/>
    <property type="match status" value="1"/>
</dbReference>
<dbReference type="Pfam" id="PF02852">
    <property type="entry name" value="Pyr_redox_dim"/>
    <property type="match status" value="1"/>
</dbReference>
<dbReference type="PIRSF" id="PIRSF000350">
    <property type="entry name" value="Mercury_reductase_MerA"/>
    <property type="match status" value="1"/>
</dbReference>
<dbReference type="PRINTS" id="PR00368">
    <property type="entry name" value="FADPNR"/>
</dbReference>
<dbReference type="PRINTS" id="PR00411">
    <property type="entry name" value="PNDRDTASEI"/>
</dbReference>
<dbReference type="SUPFAM" id="SSF51905">
    <property type="entry name" value="FAD/NAD(P)-binding domain"/>
    <property type="match status" value="1"/>
</dbReference>
<dbReference type="SUPFAM" id="SSF55424">
    <property type="entry name" value="FAD/NAD-linked reductases, dimerisation (C-terminal) domain"/>
    <property type="match status" value="1"/>
</dbReference>
<keyword id="KW-0963">Cytoplasm</keyword>
<keyword id="KW-0274">FAD</keyword>
<keyword id="KW-0285">Flavoprotein</keyword>
<keyword id="KW-0520">NAD</keyword>
<keyword id="KW-0521">NADP</keyword>
<keyword id="KW-0560">Oxidoreductase</keyword>
<keyword id="KW-1185">Reference proteome</keyword>
<protein>
    <recommendedName>
        <fullName evidence="1">Soluble pyridine nucleotide transhydrogenase</fullName>
        <shortName evidence="1">STH</shortName>
        <ecNumber evidence="1">1.6.1.1</ecNumber>
    </recommendedName>
    <alternativeName>
        <fullName evidence="1">NAD(P)(+) transhydrogenase [B-specific]</fullName>
    </alternativeName>
</protein>
<evidence type="ECO:0000255" key="1">
    <source>
        <dbReference type="HAMAP-Rule" id="MF_00247"/>
    </source>
</evidence>
<feature type="chain" id="PRO_1000012566" description="Soluble pyridine nucleotide transhydrogenase">
    <location>
        <begin position="1"/>
        <end position="464"/>
    </location>
</feature>
<feature type="binding site" evidence="1">
    <location>
        <begin position="35"/>
        <end position="44"/>
    </location>
    <ligand>
        <name>FAD</name>
        <dbReference type="ChEBI" id="CHEBI:57692"/>
    </ligand>
</feature>
<organism>
    <name type="scientific">Stutzerimonas stutzeri (strain A1501)</name>
    <name type="common">Pseudomonas stutzeri</name>
    <dbReference type="NCBI Taxonomy" id="379731"/>
    <lineage>
        <taxon>Bacteria</taxon>
        <taxon>Pseudomonadati</taxon>
        <taxon>Pseudomonadota</taxon>
        <taxon>Gammaproteobacteria</taxon>
        <taxon>Pseudomonadales</taxon>
        <taxon>Pseudomonadaceae</taxon>
        <taxon>Stutzerimonas</taxon>
    </lineage>
</organism>
<accession>A4VMU6</accession>
<proteinExistence type="inferred from homology"/>